<gene>
    <name type="primary">yhcD</name>
    <name type="ordered locus">BSU09040</name>
</gene>
<sequence>MKKANPFTHAGLPFLLFPSIMFLSNKSMEYVVFHLDLVYYVTHTPRIFSGR</sequence>
<feature type="chain" id="PRO_0000049558" description="Uncharacterized protein YhcD">
    <location>
        <begin position="1"/>
        <end position="51"/>
    </location>
</feature>
<reference key="1">
    <citation type="journal article" date="1996" name="Microbiology">
        <title>A 22 kb DNA sequence in the cspB-glpPFKD region at 75 degrees on the Bacillus subtilis chromosome.</title>
        <authorList>
            <person name="Noback M.A."/>
            <person name="Terpstra P."/>
            <person name="Holsappel S."/>
            <person name="Venema G."/>
            <person name="Bron S."/>
        </authorList>
    </citation>
    <scope>NUCLEOTIDE SEQUENCE [GENOMIC DNA]</scope>
    <source>
        <strain>168</strain>
    </source>
</reference>
<reference key="2">
    <citation type="journal article" date="1997" name="Nature">
        <title>The complete genome sequence of the Gram-positive bacterium Bacillus subtilis.</title>
        <authorList>
            <person name="Kunst F."/>
            <person name="Ogasawara N."/>
            <person name="Moszer I."/>
            <person name="Albertini A.M."/>
            <person name="Alloni G."/>
            <person name="Azevedo V."/>
            <person name="Bertero M.G."/>
            <person name="Bessieres P."/>
            <person name="Bolotin A."/>
            <person name="Borchert S."/>
            <person name="Borriss R."/>
            <person name="Boursier L."/>
            <person name="Brans A."/>
            <person name="Braun M."/>
            <person name="Brignell S.C."/>
            <person name="Bron S."/>
            <person name="Brouillet S."/>
            <person name="Bruschi C.V."/>
            <person name="Caldwell B."/>
            <person name="Capuano V."/>
            <person name="Carter N.M."/>
            <person name="Choi S.-K."/>
            <person name="Codani J.-J."/>
            <person name="Connerton I.F."/>
            <person name="Cummings N.J."/>
            <person name="Daniel R.A."/>
            <person name="Denizot F."/>
            <person name="Devine K.M."/>
            <person name="Duesterhoeft A."/>
            <person name="Ehrlich S.D."/>
            <person name="Emmerson P.T."/>
            <person name="Entian K.-D."/>
            <person name="Errington J."/>
            <person name="Fabret C."/>
            <person name="Ferrari E."/>
            <person name="Foulger D."/>
            <person name="Fritz C."/>
            <person name="Fujita M."/>
            <person name="Fujita Y."/>
            <person name="Fuma S."/>
            <person name="Galizzi A."/>
            <person name="Galleron N."/>
            <person name="Ghim S.-Y."/>
            <person name="Glaser P."/>
            <person name="Goffeau A."/>
            <person name="Golightly E.J."/>
            <person name="Grandi G."/>
            <person name="Guiseppi G."/>
            <person name="Guy B.J."/>
            <person name="Haga K."/>
            <person name="Haiech J."/>
            <person name="Harwood C.R."/>
            <person name="Henaut A."/>
            <person name="Hilbert H."/>
            <person name="Holsappel S."/>
            <person name="Hosono S."/>
            <person name="Hullo M.-F."/>
            <person name="Itaya M."/>
            <person name="Jones L.-M."/>
            <person name="Joris B."/>
            <person name="Karamata D."/>
            <person name="Kasahara Y."/>
            <person name="Klaerr-Blanchard M."/>
            <person name="Klein C."/>
            <person name="Kobayashi Y."/>
            <person name="Koetter P."/>
            <person name="Koningstein G."/>
            <person name="Krogh S."/>
            <person name="Kumano M."/>
            <person name="Kurita K."/>
            <person name="Lapidus A."/>
            <person name="Lardinois S."/>
            <person name="Lauber J."/>
            <person name="Lazarevic V."/>
            <person name="Lee S.-M."/>
            <person name="Levine A."/>
            <person name="Liu H."/>
            <person name="Masuda S."/>
            <person name="Mauel C."/>
            <person name="Medigue C."/>
            <person name="Medina N."/>
            <person name="Mellado R.P."/>
            <person name="Mizuno M."/>
            <person name="Moestl D."/>
            <person name="Nakai S."/>
            <person name="Noback M."/>
            <person name="Noone D."/>
            <person name="O'Reilly M."/>
            <person name="Ogawa K."/>
            <person name="Ogiwara A."/>
            <person name="Oudega B."/>
            <person name="Park S.-H."/>
            <person name="Parro V."/>
            <person name="Pohl T.M."/>
            <person name="Portetelle D."/>
            <person name="Porwollik S."/>
            <person name="Prescott A.M."/>
            <person name="Presecan E."/>
            <person name="Pujic P."/>
            <person name="Purnelle B."/>
            <person name="Rapoport G."/>
            <person name="Rey M."/>
            <person name="Reynolds S."/>
            <person name="Rieger M."/>
            <person name="Rivolta C."/>
            <person name="Rocha E."/>
            <person name="Roche B."/>
            <person name="Rose M."/>
            <person name="Sadaie Y."/>
            <person name="Sato T."/>
            <person name="Scanlan E."/>
            <person name="Schleich S."/>
            <person name="Schroeter R."/>
            <person name="Scoffone F."/>
            <person name="Sekiguchi J."/>
            <person name="Sekowska A."/>
            <person name="Seror S.J."/>
            <person name="Serror P."/>
            <person name="Shin B.-S."/>
            <person name="Soldo B."/>
            <person name="Sorokin A."/>
            <person name="Tacconi E."/>
            <person name="Takagi T."/>
            <person name="Takahashi H."/>
            <person name="Takemaru K."/>
            <person name="Takeuchi M."/>
            <person name="Tamakoshi A."/>
            <person name="Tanaka T."/>
            <person name="Terpstra P."/>
            <person name="Tognoni A."/>
            <person name="Tosato V."/>
            <person name="Uchiyama S."/>
            <person name="Vandenbol M."/>
            <person name="Vannier F."/>
            <person name="Vassarotti A."/>
            <person name="Viari A."/>
            <person name="Wambutt R."/>
            <person name="Wedler E."/>
            <person name="Wedler H."/>
            <person name="Weitzenegger T."/>
            <person name="Winters P."/>
            <person name="Wipat A."/>
            <person name="Yamamoto H."/>
            <person name="Yamane K."/>
            <person name="Yasumoto K."/>
            <person name="Yata K."/>
            <person name="Yoshida K."/>
            <person name="Yoshikawa H.-F."/>
            <person name="Zumstein E."/>
            <person name="Yoshikawa H."/>
            <person name="Danchin A."/>
        </authorList>
    </citation>
    <scope>NUCLEOTIDE SEQUENCE [LARGE SCALE GENOMIC DNA]</scope>
    <source>
        <strain>168</strain>
    </source>
</reference>
<proteinExistence type="predicted"/>
<protein>
    <recommendedName>
        <fullName>Uncharacterized protein YhcD</fullName>
    </recommendedName>
</protein>
<accession>P54588</accession>
<keyword id="KW-1185">Reference proteome</keyword>
<dbReference type="EMBL" id="X96983">
    <property type="protein sequence ID" value="CAA65687.1"/>
    <property type="molecule type" value="Genomic_DNA"/>
</dbReference>
<dbReference type="EMBL" id="AL009126">
    <property type="protein sequence ID" value="CAB12732.1"/>
    <property type="molecule type" value="Genomic_DNA"/>
</dbReference>
<dbReference type="PIR" id="H69821">
    <property type="entry name" value="H69821"/>
</dbReference>
<dbReference type="RefSeq" id="NP_388785.1">
    <property type="nucleotide sequence ID" value="NC_000964.3"/>
</dbReference>
<dbReference type="RefSeq" id="WP_003233426.1">
    <property type="nucleotide sequence ID" value="NZ_OZ025638.1"/>
</dbReference>
<dbReference type="FunCoup" id="P54588">
    <property type="interactions" value="235"/>
</dbReference>
<dbReference type="STRING" id="224308.BSU09040"/>
<dbReference type="PaxDb" id="224308-BSU09040"/>
<dbReference type="EnsemblBacteria" id="CAB12732">
    <property type="protein sequence ID" value="CAB12732"/>
    <property type="gene ID" value="BSU_09040"/>
</dbReference>
<dbReference type="GeneID" id="939260"/>
<dbReference type="KEGG" id="bsu:BSU09040"/>
<dbReference type="PATRIC" id="fig|224308.43.peg.947"/>
<dbReference type="InParanoid" id="P54588"/>
<dbReference type="OrthoDB" id="9859765at2"/>
<dbReference type="BioCyc" id="BSUB:BSU09040-MONOMER"/>
<dbReference type="Proteomes" id="UP000001570">
    <property type="component" value="Chromosome"/>
</dbReference>
<organism>
    <name type="scientific">Bacillus subtilis (strain 168)</name>
    <dbReference type="NCBI Taxonomy" id="224308"/>
    <lineage>
        <taxon>Bacteria</taxon>
        <taxon>Bacillati</taxon>
        <taxon>Bacillota</taxon>
        <taxon>Bacilli</taxon>
        <taxon>Bacillales</taxon>
        <taxon>Bacillaceae</taxon>
        <taxon>Bacillus</taxon>
    </lineage>
</organism>
<name>YHCD_BACSU</name>